<proteinExistence type="inferred from homology"/>
<keyword id="KW-0328">Glycosyltransferase</keyword>
<keyword id="KW-0441">Lipid A biosynthesis</keyword>
<keyword id="KW-0444">Lipid biosynthesis</keyword>
<keyword id="KW-0443">Lipid metabolism</keyword>
<keyword id="KW-1185">Reference proteome</keyword>
<keyword id="KW-0808">Transferase</keyword>
<name>LPXB_PARXL</name>
<comment type="function">
    <text evidence="1">Condensation of UDP-2,3-diacylglucosamine and 2,3-diacylglucosamine-1-phosphate to form lipid A disaccharide, a precursor of lipid A, a phosphorylated glycolipid that anchors the lipopolysaccharide to the outer membrane of the cell.</text>
</comment>
<comment type="catalytic activity">
    <reaction evidence="1">
        <text>a lipid X + a UDP-2-N,3-O-bis[(3R)-3-hydroxyacyl]-alpha-D-glucosamine = a lipid A disaccharide + UDP + H(+)</text>
        <dbReference type="Rhea" id="RHEA:67828"/>
        <dbReference type="ChEBI" id="CHEBI:15378"/>
        <dbReference type="ChEBI" id="CHEBI:58223"/>
        <dbReference type="ChEBI" id="CHEBI:137748"/>
        <dbReference type="ChEBI" id="CHEBI:176338"/>
        <dbReference type="ChEBI" id="CHEBI:176343"/>
        <dbReference type="EC" id="2.4.1.182"/>
    </reaction>
</comment>
<comment type="pathway">
    <text evidence="1">Bacterial outer membrane biogenesis; LPS lipid A biosynthesis.</text>
</comment>
<comment type="similarity">
    <text evidence="1">Belongs to the LpxB family.</text>
</comment>
<evidence type="ECO:0000255" key="1">
    <source>
        <dbReference type="HAMAP-Rule" id="MF_00392"/>
    </source>
</evidence>
<reference key="1">
    <citation type="journal article" date="2006" name="Proc. Natl. Acad. Sci. U.S.A.">
        <title>Burkholderia xenovorans LB400 harbors a multi-replicon, 9.73-Mbp genome shaped for versatility.</title>
        <authorList>
            <person name="Chain P.S.G."/>
            <person name="Denef V.J."/>
            <person name="Konstantinidis K.T."/>
            <person name="Vergez L.M."/>
            <person name="Agullo L."/>
            <person name="Reyes V.L."/>
            <person name="Hauser L."/>
            <person name="Cordova M."/>
            <person name="Gomez L."/>
            <person name="Gonzalez M."/>
            <person name="Land M."/>
            <person name="Lao V."/>
            <person name="Larimer F."/>
            <person name="LiPuma J.J."/>
            <person name="Mahenthiralingam E."/>
            <person name="Malfatti S.A."/>
            <person name="Marx C.J."/>
            <person name="Parnell J.J."/>
            <person name="Ramette A."/>
            <person name="Richardson P."/>
            <person name="Seeger M."/>
            <person name="Smith D."/>
            <person name="Spilker T."/>
            <person name="Sul W.J."/>
            <person name="Tsoi T.V."/>
            <person name="Ulrich L.E."/>
            <person name="Zhulin I.B."/>
            <person name="Tiedje J.M."/>
        </authorList>
    </citation>
    <scope>NUCLEOTIDE SEQUENCE [LARGE SCALE GENOMIC DNA]</scope>
    <source>
        <strain>LB400</strain>
    </source>
</reference>
<gene>
    <name evidence="1" type="primary">lpxB</name>
    <name type="ordered locus">Bxeno_A2722</name>
    <name type="ORF">Bxe_A1695</name>
</gene>
<organism>
    <name type="scientific">Paraburkholderia xenovorans (strain LB400)</name>
    <dbReference type="NCBI Taxonomy" id="266265"/>
    <lineage>
        <taxon>Bacteria</taxon>
        <taxon>Pseudomonadati</taxon>
        <taxon>Pseudomonadota</taxon>
        <taxon>Betaproteobacteria</taxon>
        <taxon>Burkholderiales</taxon>
        <taxon>Burkholderiaceae</taxon>
        <taxon>Paraburkholderia</taxon>
    </lineage>
</organism>
<protein>
    <recommendedName>
        <fullName evidence="1">Lipid-A-disaccharide synthase</fullName>
        <ecNumber evidence="1">2.4.1.182</ecNumber>
    </recommendedName>
</protein>
<accession>Q13XC9</accession>
<sequence>MALQPSPLRVAMVAGEPSGDLLAASLLDGLASRLPAGTQYYGIGGPRMIATGFDAHFPMEKLTVRGYVEALKHIPEILGIRTELKRQLLAEPPSVFVGVDAPDFNFGLEHPLRDAGIPTVHFVCPSIWAWRGGRIKKIAKAVDHMLCVFPFETALLEKAGVAASYVGHPLADEIPLVPDTLGARRALGLAEEGPIIAVLPGSRRSEIDLIGPTFFAAIEMMQHQEPALRFVMPAATPALREMLRPLVDSHPGLALTITDGQSQLAMTAADAILVKSGTVTLEAALLKKPMVISYKVPWLTGQIMRRQGYLPYVGLPNILAGRFVVPEILQHFATPQALAEATLKQLRDENNRRTLTEIFTEMHHVLKQNTAQRAAEVVASVIEKRKARP</sequence>
<feature type="chain" id="PRO_0000255169" description="Lipid-A-disaccharide synthase">
    <location>
        <begin position="1"/>
        <end position="389"/>
    </location>
</feature>
<dbReference type="EC" id="2.4.1.182" evidence="1"/>
<dbReference type="EMBL" id="CP000270">
    <property type="protein sequence ID" value="ABE31260.1"/>
    <property type="molecule type" value="Genomic_DNA"/>
</dbReference>
<dbReference type="RefSeq" id="WP_011488856.1">
    <property type="nucleotide sequence ID" value="NC_007951.1"/>
</dbReference>
<dbReference type="SMR" id="Q13XC9"/>
<dbReference type="STRING" id="266265.Bxe_A1695"/>
<dbReference type="CAZy" id="GT19">
    <property type="family name" value="Glycosyltransferase Family 19"/>
</dbReference>
<dbReference type="KEGG" id="bxe:Bxe_A1695"/>
<dbReference type="PATRIC" id="fig|266265.5.peg.2852"/>
<dbReference type="eggNOG" id="COG0763">
    <property type="taxonomic scope" value="Bacteria"/>
</dbReference>
<dbReference type="OrthoDB" id="9801642at2"/>
<dbReference type="UniPathway" id="UPA00973"/>
<dbReference type="Proteomes" id="UP000001817">
    <property type="component" value="Chromosome 1"/>
</dbReference>
<dbReference type="GO" id="GO:0016020">
    <property type="term" value="C:membrane"/>
    <property type="evidence" value="ECO:0007669"/>
    <property type="project" value="GOC"/>
</dbReference>
<dbReference type="GO" id="GO:0008915">
    <property type="term" value="F:lipid-A-disaccharide synthase activity"/>
    <property type="evidence" value="ECO:0007669"/>
    <property type="project" value="UniProtKB-UniRule"/>
</dbReference>
<dbReference type="GO" id="GO:0005543">
    <property type="term" value="F:phospholipid binding"/>
    <property type="evidence" value="ECO:0007669"/>
    <property type="project" value="TreeGrafter"/>
</dbReference>
<dbReference type="GO" id="GO:0009245">
    <property type="term" value="P:lipid A biosynthetic process"/>
    <property type="evidence" value="ECO:0007669"/>
    <property type="project" value="UniProtKB-UniRule"/>
</dbReference>
<dbReference type="HAMAP" id="MF_00392">
    <property type="entry name" value="LpxB"/>
    <property type="match status" value="1"/>
</dbReference>
<dbReference type="InterPro" id="IPR003835">
    <property type="entry name" value="Glyco_trans_19"/>
</dbReference>
<dbReference type="NCBIfam" id="TIGR00215">
    <property type="entry name" value="lpxB"/>
    <property type="match status" value="1"/>
</dbReference>
<dbReference type="PANTHER" id="PTHR30372">
    <property type="entry name" value="LIPID-A-DISACCHARIDE SYNTHASE"/>
    <property type="match status" value="1"/>
</dbReference>
<dbReference type="PANTHER" id="PTHR30372:SF4">
    <property type="entry name" value="LIPID-A-DISACCHARIDE SYNTHASE, MITOCHONDRIAL-RELATED"/>
    <property type="match status" value="1"/>
</dbReference>
<dbReference type="Pfam" id="PF02684">
    <property type="entry name" value="LpxB"/>
    <property type="match status" value="1"/>
</dbReference>
<dbReference type="SUPFAM" id="SSF53756">
    <property type="entry name" value="UDP-Glycosyltransferase/glycogen phosphorylase"/>
    <property type="match status" value="1"/>
</dbReference>